<proteinExistence type="evidence at transcript level"/>
<reference key="1">
    <citation type="journal article" date="2000" name="Nature">
        <title>Sequence and analysis of chromosome 3 of the plant Arabidopsis thaliana.</title>
        <authorList>
            <person name="Salanoubat M."/>
            <person name="Lemcke K."/>
            <person name="Rieger M."/>
            <person name="Ansorge W."/>
            <person name="Unseld M."/>
            <person name="Fartmann B."/>
            <person name="Valle G."/>
            <person name="Bloecker H."/>
            <person name="Perez-Alonso M."/>
            <person name="Obermaier B."/>
            <person name="Delseny M."/>
            <person name="Boutry M."/>
            <person name="Grivell L.A."/>
            <person name="Mache R."/>
            <person name="Puigdomenech P."/>
            <person name="De Simone V."/>
            <person name="Choisne N."/>
            <person name="Artiguenave F."/>
            <person name="Robert C."/>
            <person name="Brottier P."/>
            <person name="Wincker P."/>
            <person name="Cattolico L."/>
            <person name="Weissenbach J."/>
            <person name="Saurin W."/>
            <person name="Quetier F."/>
            <person name="Schaefer M."/>
            <person name="Mueller-Auer S."/>
            <person name="Gabel C."/>
            <person name="Fuchs M."/>
            <person name="Benes V."/>
            <person name="Wurmbach E."/>
            <person name="Drzonek H."/>
            <person name="Erfle H."/>
            <person name="Jordan N."/>
            <person name="Bangert S."/>
            <person name="Wiedelmann R."/>
            <person name="Kranz H."/>
            <person name="Voss H."/>
            <person name="Holland R."/>
            <person name="Brandt P."/>
            <person name="Nyakatura G."/>
            <person name="Vezzi A."/>
            <person name="D'Angelo M."/>
            <person name="Pallavicini A."/>
            <person name="Toppo S."/>
            <person name="Simionati B."/>
            <person name="Conrad A."/>
            <person name="Hornischer K."/>
            <person name="Kauer G."/>
            <person name="Loehnert T.-H."/>
            <person name="Nordsiek G."/>
            <person name="Reichelt J."/>
            <person name="Scharfe M."/>
            <person name="Schoen O."/>
            <person name="Bargues M."/>
            <person name="Terol J."/>
            <person name="Climent J."/>
            <person name="Navarro P."/>
            <person name="Collado C."/>
            <person name="Perez-Perez A."/>
            <person name="Ottenwaelder B."/>
            <person name="Duchemin D."/>
            <person name="Cooke R."/>
            <person name="Laudie M."/>
            <person name="Berger-Llauro C."/>
            <person name="Purnelle B."/>
            <person name="Masuy D."/>
            <person name="de Haan M."/>
            <person name="Maarse A.C."/>
            <person name="Alcaraz J.-P."/>
            <person name="Cottet A."/>
            <person name="Casacuberta E."/>
            <person name="Monfort A."/>
            <person name="Argiriou A."/>
            <person name="Flores M."/>
            <person name="Liguori R."/>
            <person name="Vitale D."/>
            <person name="Mannhaupt G."/>
            <person name="Haase D."/>
            <person name="Schoof H."/>
            <person name="Rudd S."/>
            <person name="Zaccaria P."/>
            <person name="Mewes H.-W."/>
            <person name="Mayer K.F.X."/>
            <person name="Kaul S."/>
            <person name="Town C.D."/>
            <person name="Koo H.L."/>
            <person name="Tallon L.J."/>
            <person name="Jenkins J."/>
            <person name="Rooney T."/>
            <person name="Rizzo M."/>
            <person name="Walts A."/>
            <person name="Utterback T."/>
            <person name="Fujii C.Y."/>
            <person name="Shea T.P."/>
            <person name="Creasy T.H."/>
            <person name="Haas B."/>
            <person name="Maiti R."/>
            <person name="Wu D."/>
            <person name="Peterson J."/>
            <person name="Van Aken S."/>
            <person name="Pai G."/>
            <person name="Militscher J."/>
            <person name="Sellers P."/>
            <person name="Gill J.E."/>
            <person name="Feldblyum T.V."/>
            <person name="Preuss D."/>
            <person name="Lin X."/>
            <person name="Nierman W.C."/>
            <person name="Salzberg S.L."/>
            <person name="White O."/>
            <person name="Venter J.C."/>
            <person name="Fraser C.M."/>
            <person name="Kaneko T."/>
            <person name="Nakamura Y."/>
            <person name="Sato S."/>
            <person name="Kato T."/>
            <person name="Asamizu E."/>
            <person name="Sasamoto S."/>
            <person name="Kimura T."/>
            <person name="Idesawa K."/>
            <person name="Kawashima K."/>
            <person name="Kishida Y."/>
            <person name="Kiyokawa C."/>
            <person name="Kohara M."/>
            <person name="Matsumoto M."/>
            <person name="Matsuno A."/>
            <person name="Muraki A."/>
            <person name="Nakayama S."/>
            <person name="Nakazaki N."/>
            <person name="Shinpo S."/>
            <person name="Takeuchi C."/>
            <person name="Wada T."/>
            <person name="Watanabe A."/>
            <person name="Yamada M."/>
            <person name="Yasuda M."/>
            <person name="Tabata S."/>
        </authorList>
    </citation>
    <scope>NUCLEOTIDE SEQUENCE [LARGE SCALE GENOMIC DNA]</scope>
    <source>
        <strain>cv. Columbia</strain>
    </source>
</reference>
<reference key="2">
    <citation type="journal article" date="2017" name="Plant J.">
        <title>Araport11: a complete reannotation of the Arabidopsis thaliana reference genome.</title>
        <authorList>
            <person name="Cheng C.Y."/>
            <person name="Krishnakumar V."/>
            <person name="Chan A.P."/>
            <person name="Thibaud-Nissen F."/>
            <person name="Schobel S."/>
            <person name="Town C.D."/>
        </authorList>
    </citation>
    <scope>GENOME REANNOTATION</scope>
    <source>
        <strain>cv. Columbia</strain>
    </source>
</reference>
<reference key="3">
    <citation type="submission" date="2006-07" db="EMBL/GenBank/DDBJ databases">
        <title>Large-scale analysis of RIKEN Arabidopsis full-length (RAFL) cDNAs.</title>
        <authorList>
            <person name="Totoki Y."/>
            <person name="Seki M."/>
            <person name="Ishida J."/>
            <person name="Nakajima M."/>
            <person name="Enju A."/>
            <person name="Kamiya A."/>
            <person name="Narusaka M."/>
            <person name="Shin-i T."/>
            <person name="Nakagawa M."/>
            <person name="Sakamoto N."/>
            <person name="Oishi K."/>
            <person name="Kohara Y."/>
            <person name="Kobayashi M."/>
            <person name="Toyoda A."/>
            <person name="Sakaki Y."/>
            <person name="Sakurai T."/>
            <person name="Iida K."/>
            <person name="Akiyama K."/>
            <person name="Satou M."/>
            <person name="Toyoda T."/>
            <person name="Konagaya A."/>
            <person name="Carninci P."/>
            <person name="Kawai J."/>
            <person name="Hayashizaki Y."/>
            <person name="Shinozaki K."/>
        </authorList>
    </citation>
    <scope>NUCLEOTIDE SEQUENCE [LARGE SCALE MRNA]</scope>
    <source>
        <strain>cv. Columbia</strain>
    </source>
</reference>
<feature type="signal peptide" evidence="2">
    <location>
        <begin position="1"/>
        <end position="24"/>
    </location>
</feature>
<feature type="chain" id="PRO_0000010807" description="Germin-like protein subfamily 1 member 7">
    <location>
        <begin position="25"/>
        <end position="229"/>
    </location>
</feature>
<feature type="domain" description="Cupin type-1" evidence="2">
    <location>
        <begin position="64"/>
        <end position="215"/>
    </location>
</feature>
<feature type="binding site" evidence="1">
    <location>
        <position position="112"/>
    </location>
    <ligand>
        <name>Mn(2+)</name>
        <dbReference type="ChEBI" id="CHEBI:29035"/>
    </ligand>
</feature>
<feature type="binding site" evidence="1">
    <location>
        <position position="114"/>
    </location>
    <ligand>
        <name>Mn(2+)</name>
        <dbReference type="ChEBI" id="CHEBI:29035"/>
    </ligand>
</feature>
<feature type="binding site" evidence="1">
    <location>
        <position position="119"/>
    </location>
    <ligand>
        <name>Mn(2+)</name>
        <dbReference type="ChEBI" id="CHEBI:29035"/>
    </ligand>
</feature>
<feature type="binding site" evidence="1">
    <location>
        <position position="161"/>
    </location>
    <ligand>
        <name>Mn(2+)</name>
        <dbReference type="ChEBI" id="CHEBI:29035"/>
    </ligand>
</feature>
<feature type="glycosylation site" description="N-linked (GlcNAc...) asparagine" evidence="2">
    <location>
        <position position="79"/>
    </location>
</feature>
<feature type="disulfide bond" evidence="1">
    <location>
        <begin position="34"/>
        <end position="50"/>
    </location>
</feature>
<accession>Q9SFF9</accession>
<accession>Q0WPC3</accession>
<gene>
    <name type="ordered locus">At3g05950</name>
    <name type="ORF">F10A16.25</name>
    <name type="ORF">F2O10.9</name>
</gene>
<protein>
    <recommendedName>
        <fullName>Germin-like protein subfamily 1 member 7</fullName>
    </recommendedName>
</protein>
<evidence type="ECO:0000250" key="1"/>
<evidence type="ECO:0000255" key="2"/>
<evidence type="ECO:0000305" key="3"/>
<name>GL17_ARATH</name>
<sequence length="229" mass="24736">MEGFLRFLVAKAILLALASSFVSCYDPSPLQDFCVAVDDASGVFVNGKFCKDPKYVKAEDFFTSGLNIAGNTINRVGSNVTNVNVDKIPGLNTLGVSLVRIDFAPGGQNPPHTHPRATEILVVVEGTLLVGFVTSNQDNNRLFSKVLYPGDVFVFPIGMIHFQVNVGRTNAVAFAGLGSQNPGTITIADAVFGSKPSIMPEILAKAFQLDVNVVKYLEARFSSNYDRHY</sequence>
<dbReference type="EMBL" id="AC012393">
    <property type="protein sequence ID" value="AAF26097.1"/>
    <property type="molecule type" value="Genomic_DNA"/>
</dbReference>
<dbReference type="EMBL" id="AC013454">
    <property type="protein sequence ID" value="AAF23221.1"/>
    <property type="molecule type" value="Genomic_DNA"/>
</dbReference>
<dbReference type="EMBL" id="CP002686">
    <property type="protein sequence ID" value="AEE74322.1"/>
    <property type="molecule type" value="Genomic_DNA"/>
</dbReference>
<dbReference type="EMBL" id="AK229153">
    <property type="protein sequence ID" value="BAF01026.1"/>
    <property type="molecule type" value="mRNA"/>
</dbReference>
<dbReference type="RefSeq" id="NP_187246.1">
    <property type="nucleotide sequence ID" value="NM_111469.3"/>
</dbReference>
<dbReference type="SMR" id="Q9SFF9"/>
<dbReference type="FunCoup" id="Q9SFF9">
    <property type="interactions" value="35"/>
</dbReference>
<dbReference type="STRING" id="3702.Q9SFF9"/>
<dbReference type="GlyGen" id="Q9SFF9">
    <property type="glycosylation" value="1 site"/>
</dbReference>
<dbReference type="PaxDb" id="3702-AT3G05950.1"/>
<dbReference type="ProteomicsDB" id="248620"/>
<dbReference type="EnsemblPlants" id="AT3G05950.1">
    <property type="protein sequence ID" value="AT3G05950.1"/>
    <property type="gene ID" value="AT3G05950"/>
</dbReference>
<dbReference type="GeneID" id="819765"/>
<dbReference type="Gramene" id="AT3G05950.1">
    <property type="protein sequence ID" value="AT3G05950.1"/>
    <property type="gene ID" value="AT3G05950"/>
</dbReference>
<dbReference type="KEGG" id="ath:AT3G05950"/>
<dbReference type="Araport" id="AT3G05950"/>
<dbReference type="TAIR" id="AT3G05950"/>
<dbReference type="eggNOG" id="ENOG502QQ4A">
    <property type="taxonomic scope" value="Eukaryota"/>
</dbReference>
<dbReference type="HOGENOM" id="CLU_015790_0_0_1"/>
<dbReference type="InParanoid" id="Q9SFF9"/>
<dbReference type="OMA" id="WATFAYA"/>
<dbReference type="OrthoDB" id="1921208at2759"/>
<dbReference type="PhylomeDB" id="Q9SFF9"/>
<dbReference type="PRO" id="PR:Q9SFF9"/>
<dbReference type="Proteomes" id="UP000006548">
    <property type="component" value="Chromosome 3"/>
</dbReference>
<dbReference type="ExpressionAtlas" id="Q9SFF9">
    <property type="expression patterns" value="baseline and differential"/>
</dbReference>
<dbReference type="GO" id="GO:0048046">
    <property type="term" value="C:apoplast"/>
    <property type="evidence" value="ECO:0007669"/>
    <property type="project" value="UniProtKB-SubCell"/>
</dbReference>
<dbReference type="GO" id="GO:0030145">
    <property type="term" value="F:manganese ion binding"/>
    <property type="evidence" value="ECO:0007669"/>
    <property type="project" value="InterPro"/>
</dbReference>
<dbReference type="CDD" id="cd02241">
    <property type="entry name" value="cupin_OxOx"/>
    <property type="match status" value="1"/>
</dbReference>
<dbReference type="FunFam" id="2.60.120.10:FF:000005">
    <property type="entry name" value="Germin-like protein subfamily 1 member 8"/>
    <property type="match status" value="1"/>
</dbReference>
<dbReference type="Gene3D" id="2.60.120.10">
    <property type="entry name" value="Jelly Rolls"/>
    <property type="match status" value="1"/>
</dbReference>
<dbReference type="InterPro" id="IPR006045">
    <property type="entry name" value="Cupin_1"/>
</dbReference>
<dbReference type="InterPro" id="IPR001929">
    <property type="entry name" value="Germin"/>
</dbReference>
<dbReference type="InterPro" id="IPR019780">
    <property type="entry name" value="Germin_Mn-BS"/>
</dbReference>
<dbReference type="InterPro" id="IPR014710">
    <property type="entry name" value="RmlC-like_jellyroll"/>
</dbReference>
<dbReference type="InterPro" id="IPR011051">
    <property type="entry name" value="RmlC_Cupin_sf"/>
</dbReference>
<dbReference type="PANTHER" id="PTHR31238">
    <property type="entry name" value="GERMIN-LIKE PROTEIN SUBFAMILY 3 MEMBER 3"/>
    <property type="match status" value="1"/>
</dbReference>
<dbReference type="Pfam" id="PF00190">
    <property type="entry name" value="Cupin_1"/>
    <property type="match status" value="1"/>
</dbReference>
<dbReference type="PRINTS" id="PR00325">
    <property type="entry name" value="GERMIN"/>
</dbReference>
<dbReference type="SMART" id="SM00835">
    <property type="entry name" value="Cupin_1"/>
    <property type="match status" value="1"/>
</dbReference>
<dbReference type="SUPFAM" id="SSF51182">
    <property type="entry name" value="RmlC-like cupins"/>
    <property type="match status" value="1"/>
</dbReference>
<dbReference type="PROSITE" id="PS00725">
    <property type="entry name" value="GERMIN"/>
    <property type="match status" value="1"/>
</dbReference>
<comment type="function">
    <text>May play a role in plant defense. Probably has no oxalate oxidase activity even if the active site is conserved.</text>
</comment>
<comment type="subunit">
    <text evidence="1">Oligomer (believed to be a pentamer but probably hexamer).</text>
</comment>
<comment type="subcellular location">
    <subcellularLocation>
        <location evidence="1">Secreted</location>
        <location evidence="1">Extracellular space</location>
        <location evidence="1">Apoplast</location>
    </subcellularLocation>
</comment>
<comment type="similarity">
    <text evidence="3">Belongs to the germin family.</text>
</comment>
<organism>
    <name type="scientific">Arabidopsis thaliana</name>
    <name type="common">Mouse-ear cress</name>
    <dbReference type="NCBI Taxonomy" id="3702"/>
    <lineage>
        <taxon>Eukaryota</taxon>
        <taxon>Viridiplantae</taxon>
        <taxon>Streptophyta</taxon>
        <taxon>Embryophyta</taxon>
        <taxon>Tracheophyta</taxon>
        <taxon>Spermatophyta</taxon>
        <taxon>Magnoliopsida</taxon>
        <taxon>eudicotyledons</taxon>
        <taxon>Gunneridae</taxon>
        <taxon>Pentapetalae</taxon>
        <taxon>rosids</taxon>
        <taxon>malvids</taxon>
        <taxon>Brassicales</taxon>
        <taxon>Brassicaceae</taxon>
        <taxon>Camelineae</taxon>
        <taxon>Arabidopsis</taxon>
    </lineage>
</organism>
<keyword id="KW-0052">Apoplast</keyword>
<keyword id="KW-1015">Disulfide bond</keyword>
<keyword id="KW-0325">Glycoprotein</keyword>
<keyword id="KW-0464">Manganese</keyword>
<keyword id="KW-0479">Metal-binding</keyword>
<keyword id="KW-1185">Reference proteome</keyword>
<keyword id="KW-0964">Secreted</keyword>
<keyword id="KW-0732">Signal</keyword>